<accession>Q3BWV8</accession>
<name>RL17_XANE5</name>
<dbReference type="EMBL" id="AM039952">
    <property type="protein sequence ID" value="CAJ22655.1"/>
    <property type="molecule type" value="Genomic_DNA"/>
</dbReference>
<dbReference type="RefSeq" id="WP_011346543.1">
    <property type="nucleotide sequence ID" value="NZ_CP017190.1"/>
</dbReference>
<dbReference type="SMR" id="Q3BWV8"/>
<dbReference type="STRING" id="456327.BJD11_17615"/>
<dbReference type="KEGG" id="xcv:XCV1024"/>
<dbReference type="eggNOG" id="COG0203">
    <property type="taxonomic scope" value="Bacteria"/>
</dbReference>
<dbReference type="HOGENOM" id="CLU_074407_2_0_6"/>
<dbReference type="Proteomes" id="UP000007069">
    <property type="component" value="Chromosome"/>
</dbReference>
<dbReference type="GO" id="GO:0022625">
    <property type="term" value="C:cytosolic large ribosomal subunit"/>
    <property type="evidence" value="ECO:0007669"/>
    <property type="project" value="TreeGrafter"/>
</dbReference>
<dbReference type="GO" id="GO:0003735">
    <property type="term" value="F:structural constituent of ribosome"/>
    <property type="evidence" value="ECO:0007669"/>
    <property type="project" value="InterPro"/>
</dbReference>
<dbReference type="GO" id="GO:0006412">
    <property type="term" value="P:translation"/>
    <property type="evidence" value="ECO:0007669"/>
    <property type="project" value="UniProtKB-UniRule"/>
</dbReference>
<dbReference type="FunFam" id="3.90.1030.10:FF:000001">
    <property type="entry name" value="50S ribosomal protein L17"/>
    <property type="match status" value="1"/>
</dbReference>
<dbReference type="Gene3D" id="3.90.1030.10">
    <property type="entry name" value="Ribosomal protein L17"/>
    <property type="match status" value="1"/>
</dbReference>
<dbReference type="HAMAP" id="MF_01368">
    <property type="entry name" value="Ribosomal_bL17"/>
    <property type="match status" value="1"/>
</dbReference>
<dbReference type="InterPro" id="IPR000456">
    <property type="entry name" value="Ribosomal_bL17"/>
</dbReference>
<dbReference type="InterPro" id="IPR047859">
    <property type="entry name" value="Ribosomal_bL17_CS"/>
</dbReference>
<dbReference type="InterPro" id="IPR036373">
    <property type="entry name" value="Ribosomal_bL17_sf"/>
</dbReference>
<dbReference type="NCBIfam" id="TIGR00059">
    <property type="entry name" value="L17"/>
    <property type="match status" value="1"/>
</dbReference>
<dbReference type="PANTHER" id="PTHR14413:SF16">
    <property type="entry name" value="LARGE RIBOSOMAL SUBUNIT PROTEIN BL17M"/>
    <property type="match status" value="1"/>
</dbReference>
<dbReference type="PANTHER" id="PTHR14413">
    <property type="entry name" value="RIBOSOMAL PROTEIN L17"/>
    <property type="match status" value="1"/>
</dbReference>
<dbReference type="Pfam" id="PF01196">
    <property type="entry name" value="Ribosomal_L17"/>
    <property type="match status" value="1"/>
</dbReference>
<dbReference type="SUPFAM" id="SSF64263">
    <property type="entry name" value="Prokaryotic ribosomal protein L17"/>
    <property type="match status" value="1"/>
</dbReference>
<dbReference type="PROSITE" id="PS01167">
    <property type="entry name" value="RIBOSOMAL_L17"/>
    <property type="match status" value="1"/>
</dbReference>
<keyword id="KW-0687">Ribonucleoprotein</keyword>
<keyword id="KW-0689">Ribosomal protein</keyword>
<sequence length="127" mass="14259">MRHQKSGRKFNRTSAHREAMFRNMAASLFKHELIKTTLPKAKELRRVAEPLITIGKVDGVANRRLAFARLRDKEAVGKLFVELGPRYATRPGGYLRILKAGFRAGDNAPMAYVELVGRPVVAEEVAE</sequence>
<organism>
    <name type="scientific">Xanthomonas euvesicatoria pv. vesicatoria (strain 85-10)</name>
    <name type="common">Xanthomonas campestris pv. vesicatoria</name>
    <dbReference type="NCBI Taxonomy" id="316273"/>
    <lineage>
        <taxon>Bacteria</taxon>
        <taxon>Pseudomonadati</taxon>
        <taxon>Pseudomonadota</taxon>
        <taxon>Gammaproteobacteria</taxon>
        <taxon>Lysobacterales</taxon>
        <taxon>Lysobacteraceae</taxon>
        <taxon>Xanthomonas</taxon>
    </lineage>
</organism>
<reference key="1">
    <citation type="journal article" date="2005" name="J. Bacteriol.">
        <title>Insights into genome plasticity and pathogenicity of the plant pathogenic Bacterium Xanthomonas campestris pv. vesicatoria revealed by the complete genome sequence.</title>
        <authorList>
            <person name="Thieme F."/>
            <person name="Koebnik R."/>
            <person name="Bekel T."/>
            <person name="Berger C."/>
            <person name="Boch J."/>
            <person name="Buettner D."/>
            <person name="Caldana C."/>
            <person name="Gaigalat L."/>
            <person name="Goesmann A."/>
            <person name="Kay S."/>
            <person name="Kirchner O."/>
            <person name="Lanz C."/>
            <person name="Linke B."/>
            <person name="McHardy A.C."/>
            <person name="Meyer F."/>
            <person name="Mittenhuber G."/>
            <person name="Nies D.H."/>
            <person name="Niesbach-Kloesgen U."/>
            <person name="Patschkowski T."/>
            <person name="Rueckert C."/>
            <person name="Rupp O."/>
            <person name="Schneiker S."/>
            <person name="Schuster S.C."/>
            <person name="Vorhoelter F.J."/>
            <person name="Weber E."/>
            <person name="Puehler A."/>
            <person name="Bonas U."/>
            <person name="Bartels D."/>
            <person name="Kaiser O."/>
        </authorList>
    </citation>
    <scope>NUCLEOTIDE SEQUENCE [LARGE SCALE GENOMIC DNA]</scope>
    <source>
        <strain>85-10</strain>
    </source>
</reference>
<gene>
    <name evidence="1" type="primary">rplQ</name>
    <name type="ordered locus">XCV1024</name>
</gene>
<evidence type="ECO:0000255" key="1">
    <source>
        <dbReference type="HAMAP-Rule" id="MF_01368"/>
    </source>
</evidence>
<evidence type="ECO:0000305" key="2"/>
<protein>
    <recommendedName>
        <fullName evidence="1">Large ribosomal subunit protein bL17</fullName>
    </recommendedName>
    <alternativeName>
        <fullName evidence="2">50S ribosomal protein L17</fullName>
    </alternativeName>
</protein>
<proteinExistence type="inferred from homology"/>
<comment type="subunit">
    <text evidence="1">Part of the 50S ribosomal subunit. Contacts protein L32.</text>
</comment>
<comment type="similarity">
    <text evidence="1">Belongs to the bacterial ribosomal protein bL17 family.</text>
</comment>
<feature type="chain" id="PRO_0000267971" description="Large ribosomal subunit protein bL17">
    <location>
        <begin position="1"/>
        <end position="127"/>
    </location>
</feature>